<feature type="chain" id="PRO_1000096999" description="3-methyl-2-oxobutanoate hydroxymethyltransferase">
    <location>
        <begin position="1"/>
        <end position="278"/>
    </location>
</feature>
<feature type="active site" description="Proton acceptor" evidence="1">
    <location>
        <position position="181"/>
    </location>
</feature>
<feature type="binding site" evidence="1">
    <location>
        <begin position="44"/>
        <end position="45"/>
    </location>
    <ligand>
        <name>3-methyl-2-oxobutanoate</name>
        <dbReference type="ChEBI" id="CHEBI:11851"/>
    </ligand>
</feature>
<feature type="binding site" evidence="1">
    <location>
        <position position="44"/>
    </location>
    <ligand>
        <name>Mg(2+)</name>
        <dbReference type="ChEBI" id="CHEBI:18420"/>
    </ligand>
</feature>
<feature type="binding site" evidence="1">
    <location>
        <position position="83"/>
    </location>
    <ligand>
        <name>3-methyl-2-oxobutanoate</name>
        <dbReference type="ChEBI" id="CHEBI:11851"/>
    </ligand>
</feature>
<feature type="binding site" evidence="1">
    <location>
        <position position="83"/>
    </location>
    <ligand>
        <name>Mg(2+)</name>
        <dbReference type="ChEBI" id="CHEBI:18420"/>
    </ligand>
</feature>
<feature type="binding site" evidence="1">
    <location>
        <position position="112"/>
    </location>
    <ligand>
        <name>3-methyl-2-oxobutanoate</name>
        <dbReference type="ChEBI" id="CHEBI:11851"/>
    </ligand>
</feature>
<feature type="binding site" evidence="1">
    <location>
        <position position="114"/>
    </location>
    <ligand>
        <name>Mg(2+)</name>
        <dbReference type="ChEBI" id="CHEBI:18420"/>
    </ligand>
</feature>
<dbReference type="EC" id="2.1.2.11" evidence="1"/>
<dbReference type="EMBL" id="CP000686">
    <property type="protein sequence ID" value="ABQ89161.1"/>
    <property type="molecule type" value="Genomic_DNA"/>
</dbReference>
<dbReference type="RefSeq" id="WP_011955516.1">
    <property type="nucleotide sequence ID" value="NC_009523.1"/>
</dbReference>
<dbReference type="SMR" id="A5URA8"/>
<dbReference type="STRING" id="357808.RoseRS_0745"/>
<dbReference type="KEGG" id="rrs:RoseRS_0745"/>
<dbReference type="eggNOG" id="COG0413">
    <property type="taxonomic scope" value="Bacteria"/>
</dbReference>
<dbReference type="HOGENOM" id="CLU_036645_1_0_0"/>
<dbReference type="OrthoDB" id="9781789at2"/>
<dbReference type="UniPathway" id="UPA00028">
    <property type="reaction ID" value="UER00003"/>
</dbReference>
<dbReference type="Proteomes" id="UP000006554">
    <property type="component" value="Chromosome"/>
</dbReference>
<dbReference type="GO" id="GO:0005737">
    <property type="term" value="C:cytoplasm"/>
    <property type="evidence" value="ECO:0007669"/>
    <property type="project" value="UniProtKB-SubCell"/>
</dbReference>
<dbReference type="GO" id="GO:0003864">
    <property type="term" value="F:3-methyl-2-oxobutanoate hydroxymethyltransferase activity"/>
    <property type="evidence" value="ECO:0007669"/>
    <property type="project" value="UniProtKB-UniRule"/>
</dbReference>
<dbReference type="GO" id="GO:0000287">
    <property type="term" value="F:magnesium ion binding"/>
    <property type="evidence" value="ECO:0007669"/>
    <property type="project" value="TreeGrafter"/>
</dbReference>
<dbReference type="GO" id="GO:0015940">
    <property type="term" value="P:pantothenate biosynthetic process"/>
    <property type="evidence" value="ECO:0007669"/>
    <property type="project" value="UniProtKB-UniRule"/>
</dbReference>
<dbReference type="CDD" id="cd06557">
    <property type="entry name" value="KPHMT-like"/>
    <property type="match status" value="1"/>
</dbReference>
<dbReference type="FunFam" id="3.20.20.60:FF:000003">
    <property type="entry name" value="3-methyl-2-oxobutanoate hydroxymethyltransferase"/>
    <property type="match status" value="1"/>
</dbReference>
<dbReference type="Gene3D" id="3.20.20.60">
    <property type="entry name" value="Phosphoenolpyruvate-binding domains"/>
    <property type="match status" value="1"/>
</dbReference>
<dbReference type="HAMAP" id="MF_00156">
    <property type="entry name" value="PanB"/>
    <property type="match status" value="1"/>
</dbReference>
<dbReference type="InterPro" id="IPR003700">
    <property type="entry name" value="Pantoate_hydroxy_MeTrfase"/>
</dbReference>
<dbReference type="InterPro" id="IPR015813">
    <property type="entry name" value="Pyrv/PenolPyrv_kinase-like_dom"/>
</dbReference>
<dbReference type="InterPro" id="IPR040442">
    <property type="entry name" value="Pyrv_kinase-like_dom_sf"/>
</dbReference>
<dbReference type="NCBIfam" id="TIGR00222">
    <property type="entry name" value="panB"/>
    <property type="match status" value="1"/>
</dbReference>
<dbReference type="NCBIfam" id="NF001452">
    <property type="entry name" value="PRK00311.1"/>
    <property type="match status" value="1"/>
</dbReference>
<dbReference type="PANTHER" id="PTHR20881">
    <property type="entry name" value="3-METHYL-2-OXOBUTANOATE HYDROXYMETHYLTRANSFERASE"/>
    <property type="match status" value="1"/>
</dbReference>
<dbReference type="PANTHER" id="PTHR20881:SF0">
    <property type="entry name" value="3-METHYL-2-OXOBUTANOATE HYDROXYMETHYLTRANSFERASE"/>
    <property type="match status" value="1"/>
</dbReference>
<dbReference type="Pfam" id="PF02548">
    <property type="entry name" value="Pantoate_transf"/>
    <property type="match status" value="1"/>
</dbReference>
<dbReference type="PIRSF" id="PIRSF000388">
    <property type="entry name" value="Pantoate_hydroxy_MeTrfase"/>
    <property type="match status" value="1"/>
</dbReference>
<dbReference type="SUPFAM" id="SSF51621">
    <property type="entry name" value="Phosphoenolpyruvate/pyruvate domain"/>
    <property type="match status" value="1"/>
</dbReference>
<accession>A5URA8</accession>
<protein>
    <recommendedName>
        <fullName evidence="1">3-methyl-2-oxobutanoate hydroxymethyltransferase</fullName>
        <ecNumber evidence="1">2.1.2.11</ecNumber>
    </recommendedName>
    <alternativeName>
        <fullName evidence="1">Ketopantoate hydroxymethyltransferase</fullName>
        <shortName evidence="1">KPHMT</shortName>
    </alternativeName>
</protein>
<gene>
    <name evidence="1" type="primary">panB</name>
    <name type="ordered locus">RoseRS_0745</name>
</gene>
<organism>
    <name type="scientific">Roseiflexus sp. (strain RS-1)</name>
    <dbReference type="NCBI Taxonomy" id="357808"/>
    <lineage>
        <taxon>Bacteria</taxon>
        <taxon>Bacillati</taxon>
        <taxon>Chloroflexota</taxon>
        <taxon>Chloroflexia</taxon>
        <taxon>Chloroflexales</taxon>
        <taxon>Roseiflexineae</taxon>
        <taxon>Roseiflexaceae</taxon>
        <taxon>Roseiflexus</taxon>
    </lineage>
</organism>
<name>PANB_ROSS1</name>
<sequence length="278" mass="29511">MRKTITDIQQMKVRGEPIAMLTAYDATIAALFDAAGVPMLLVGDSLGDNVLGFSSTVPVTIEDMVRHTAAVARGAQSALIVADMPFLTYATLEMAVAAARRLMQEGGAQAVKLEGGQAMVPIVRRLVECGVPVMGHLGYTPQSVHLFGKARVQGRSAAAARRMIEDALALEAAGAFALVLELVPAQLAAAITERLRIPTIGIGAGPHCDGQVQVFTDILGLRDDFKPRHTRRFAELAPLIRSAVAAYVAAVGERSFPTAEHSSRMDEAELREALEGLS</sequence>
<proteinExistence type="inferred from homology"/>
<evidence type="ECO:0000255" key="1">
    <source>
        <dbReference type="HAMAP-Rule" id="MF_00156"/>
    </source>
</evidence>
<keyword id="KW-0963">Cytoplasm</keyword>
<keyword id="KW-0460">Magnesium</keyword>
<keyword id="KW-0479">Metal-binding</keyword>
<keyword id="KW-0566">Pantothenate biosynthesis</keyword>
<keyword id="KW-0808">Transferase</keyword>
<reference key="1">
    <citation type="submission" date="2007-04" db="EMBL/GenBank/DDBJ databases">
        <title>Complete sequence of Roseiflexus sp. RS-1.</title>
        <authorList>
            <consortium name="US DOE Joint Genome Institute"/>
            <person name="Copeland A."/>
            <person name="Lucas S."/>
            <person name="Lapidus A."/>
            <person name="Barry K."/>
            <person name="Detter J.C."/>
            <person name="Glavina del Rio T."/>
            <person name="Hammon N."/>
            <person name="Israni S."/>
            <person name="Dalin E."/>
            <person name="Tice H."/>
            <person name="Pitluck S."/>
            <person name="Chertkov O."/>
            <person name="Brettin T."/>
            <person name="Bruce D."/>
            <person name="Han C."/>
            <person name="Schmutz J."/>
            <person name="Larimer F."/>
            <person name="Land M."/>
            <person name="Hauser L."/>
            <person name="Kyrpides N."/>
            <person name="Mikhailova N."/>
            <person name="Bryant D.A."/>
            <person name="Richardson P."/>
        </authorList>
    </citation>
    <scope>NUCLEOTIDE SEQUENCE [LARGE SCALE GENOMIC DNA]</scope>
    <source>
        <strain>RS-1</strain>
    </source>
</reference>
<comment type="function">
    <text evidence="1">Catalyzes the reversible reaction in which hydroxymethyl group from 5,10-methylenetetrahydrofolate is transferred onto alpha-ketoisovalerate to form ketopantoate.</text>
</comment>
<comment type="catalytic activity">
    <reaction evidence="1">
        <text>3-methyl-2-oxobutanoate + (6R)-5,10-methylene-5,6,7,8-tetrahydrofolate + H2O = 2-dehydropantoate + (6S)-5,6,7,8-tetrahydrofolate</text>
        <dbReference type="Rhea" id="RHEA:11824"/>
        <dbReference type="ChEBI" id="CHEBI:11561"/>
        <dbReference type="ChEBI" id="CHEBI:11851"/>
        <dbReference type="ChEBI" id="CHEBI:15377"/>
        <dbReference type="ChEBI" id="CHEBI:15636"/>
        <dbReference type="ChEBI" id="CHEBI:57453"/>
        <dbReference type="EC" id="2.1.2.11"/>
    </reaction>
</comment>
<comment type="cofactor">
    <cofactor evidence="1">
        <name>Mg(2+)</name>
        <dbReference type="ChEBI" id="CHEBI:18420"/>
    </cofactor>
    <text evidence="1">Binds 1 Mg(2+) ion per subunit.</text>
</comment>
<comment type="pathway">
    <text evidence="1">Cofactor biosynthesis; (R)-pantothenate biosynthesis; (R)-pantoate from 3-methyl-2-oxobutanoate: step 1/2.</text>
</comment>
<comment type="subunit">
    <text evidence="1">Homodecamer; pentamer of dimers.</text>
</comment>
<comment type="subcellular location">
    <subcellularLocation>
        <location evidence="1">Cytoplasm</location>
    </subcellularLocation>
</comment>
<comment type="similarity">
    <text evidence="1">Belongs to the PanB family.</text>
</comment>